<organism>
    <name type="scientific">Pyropia yezoensis</name>
    <name type="common">Susabi-nori</name>
    <name type="synonym">Porphyra yezoensis</name>
    <dbReference type="NCBI Taxonomy" id="2788"/>
    <lineage>
        <taxon>Eukaryota</taxon>
        <taxon>Rhodophyta</taxon>
        <taxon>Bangiophyceae</taxon>
        <taxon>Bangiales</taxon>
        <taxon>Bangiaceae</taxon>
        <taxon>Pyropia</taxon>
    </lineage>
</organism>
<keyword id="KW-0067">ATP-binding</keyword>
<keyword id="KW-0150">Chloroplast</keyword>
<keyword id="KW-0547">Nucleotide-binding</keyword>
<keyword id="KW-0934">Plastid</keyword>
<evidence type="ECO:0000250" key="1"/>
<evidence type="ECO:0000255" key="2"/>
<evidence type="ECO:0000305" key="3"/>
<gene>
    <name type="primary">cfxQ</name>
</gene>
<reference key="1">
    <citation type="submission" date="2003-11" db="EMBL/GenBank/DDBJ databases">
        <title>Whole genome sequence of Porphyra yezoensis chloroplast.</title>
        <authorList>
            <person name="Kunimoto M."/>
            <person name="Morishima K."/>
            <person name="Yoshikawa M."/>
            <person name="Fukuda S."/>
            <person name="Kobayashi T."/>
            <person name="Kobayashi M."/>
            <person name="Okazaki T."/>
            <person name="Ohara I."/>
            <person name="Nakayama I."/>
        </authorList>
    </citation>
    <scope>NUCLEOTIDE SEQUENCE [LARGE SCALE GENOMIC DNA]</scope>
    <source>
        <strain>U-51</strain>
    </source>
</reference>
<protein>
    <recommendedName>
        <fullName>Protein CfxQ homolog</fullName>
    </recommendedName>
</protein>
<comment type="function">
    <text evidence="1">Necessary for the expression of RuBisCO.</text>
</comment>
<comment type="subcellular location">
    <subcellularLocation>
        <location>Plastid</location>
        <location>Chloroplast</location>
    </subcellularLocation>
</comment>
<comment type="similarity">
    <text evidence="3">Belongs to the CbxX/CfxQ family.</text>
</comment>
<dbReference type="EMBL" id="AP006715">
    <property type="protein sequence ID" value="BAE92352.1"/>
    <property type="molecule type" value="Genomic_DNA"/>
</dbReference>
<dbReference type="SMR" id="Q1XDQ9"/>
<dbReference type="GO" id="GO:0009507">
    <property type="term" value="C:chloroplast"/>
    <property type="evidence" value="ECO:0007669"/>
    <property type="project" value="UniProtKB-SubCell"/>
</dbReference>
<dbReference type="GO" id="GO:0005524">
    <property type="term" value="F:ATP binding"/>
    <property type="evidence" value="ECO:0007669"/>
    <property type="project" value="UniProtKB-KW"/>
</dbReference>
<dbReference type="GO" id="GO:0016887">
    <property type="term" value="F:ATP hydrolysis activity"/>
    <property type="evidence" value="ECO:0007669"/>
    <property type="project" value="InterPro"/>
</dbReference>
<dbReference type="CDD" id="cd00009">
    <property type="entry name" value="AAA"/>
    <property type="match status" value="1"/>
</dbReference>
<dbReference type="FunFam" id="3.40.50.300:FF:000216">
    <property type="entry name" value="Type VII secretion ATPase EccA"/>
    <property type="match status" value="1"/>
</dbReference>
<dbReference type="Gene3D" id="1.10.8.60">
    <property type="match status" value="1"/>
</dbReference>
<dbReference type="Gene3D" id="3.40.50.300">
    <property type="entry name" value="P-loop containing nucleotide triphosphate hydrolases"/>
    <property type="match status" value="1"/>
</dbReference>
<dbReference type="InterPro" id="IPR003593">
    <property type="entry name" value="AAA+_ATPase"/>
</dbReference>
<dbReference type="InterPro" id="IPR041627">
    <property type="entry name" value="AAA_lid_6"/>
</dbReference>
<dbReference type="InterPro" id="IPR003959">
    <property type="entry name" value="ATPase_AAA_core"/>
</dbReference>
<dbReference type="InterPro" id="IPR000470">
    <property type="entry name" value="CbxX/CfqX_mono"/>
</dbReference>
<dbReference type="InterPro" id="IPR000641">
    <property type="entry name" value="CbxX/CfxQ"/>
</dbReference>
<dbReference type="InterPro" id="IPR050773">
    <property type="entry name" value="CbxX/CfxQ_RuBisCO_ESX"/>
</dbReference>
<dbReference type="InterPro" id="IPR027417">
    <property type="entry name" value="P-loop_NTPase"/>
</dbReference>
<dbReference type="NCBIfam" id="TIGR02880">
    <property type="entry name" value="cbbX_cfxQ"/>
    <property type="match status" value="1"/>
</dbReference>
<dbReference type="PANTHER" id="PTHR43392">
    <property type="entry name" value="AAA-TYPE ATPASE FAMILY PROTEIN / ANKYRIN REPEAT FAMILY PROTEIN"/>
    <property type="match status" value="1"/>
</dbReference>
<dbReference type="PANTHER" id="PTHR43392:SF2">
    <property type="entry name" value="AAA-TYPE ATPASE FAMILY PROTEIN _ ANKYRIN REPEAT FAMILY PROTEIN"/>
    <property type="match status" value="1"/>
</dbReference>
<dbReference type="Pfam" id="PF00004">
    <property type="entry name" value="AAA"/>
    <property type="match status" value="1"/>
</dbReference>
<dbReference type="Pfam" id="PF17866">
    <property type="entry name" value="AAA_lid_6"/>
    <property type="match status" value="1"/>
</dbReference>
<dbReference type="PRINTS" id="PR00819">
    <property type="entry name" value="CBXCFQXSUPER"/>
</dbReference>
<dbReference type="PRINTS" id="PR00820">
    <property type="entry name" value="CBXXCFQX"/>
</dbReference>
<dbReference type="SMART" id="SM00382">
    <property type="entry name" value="AAA"/>
    <property type="match status" value="1"/>
</dbReference>
<dbReference type="SUPFAM" id="SSF52540">
    <property type="entry name" value="P-loop containing nucleoside triphosphate hydrolases"/>
    <property type="match status" value="1"/>
</dbReference>
<proteinExistence type="inferred from homology"/>
<name>CFXQ_PYRYE</name>
<geneLocation type="chloroplast"/>
<feature type="chain" id="PRO_0000277296" description="Protein CfxQ homolog">
    <location>
        <begin position="1"/>
        <end position="300"/>
    </location>
</feature>
<feature type="binding site" evidence="2">
    <location>
        <begin position="76"/>
        <end position="83"/>
    </location>
    <ligand>
        <name>ATP</name>
        <dbReference type="ChEBI" id="CHEBI:30616"/>
    </ligand>
</feature>
<sequence>MQSQDIISNDTLVNLQEEYDRTQIQEVLNELNQELIGLVPVKTRIREIAALLLIDRLRRKLELVSGNPGLHMSFTGSPGTGKTTVAMKMADILHRLGYIKKGHLLTVTRDDLVGQYIGHTAPKTKEVLKQAMGGVLFIDEAYYLYKADNERDYDSEAIEILLQVMENQRNDLVVIFAGYKDRMEKFYESNPGLSSRVANHVDFPDYTSDELLQIAKMMIEEQQYCFTEEADKTLLEYTERRMKQPYFANARSIRNAIDRARMRQANRIFASGEKVLTKADLVTIEAEDILKSRLFSLPNA</sequence>
<accession>Q1XDQ9</accession>